<evidence type="ECO:0000255" key="1">
    <source>
        <dbReference type="HAMAP-Rule" id="MF_00391"/>
    </source>
</evidence>
<evidence type="ECO:0000305" key="2"/>
<gene>
    <name evidence="1" type="primary">rpmH</name>
    <name type="ordered locus">sce2523</name>
</gene>
<reference key="1">
    <citation type="journal article" date="2007" name="Nat. Biotechnol.">
        <title>Complete genome sequence of the myxobacterium Sorangium cellulosum.</title>
        <authorList>
            <person name="Schneiker S."/>
            <person name="Perlova O."/>
            <person name="Kaiser O."/>
            <person name="Gerth K."/>
            <person name="Alici A."/>
            <person name="Altmeyer M.O."/>
            <person name="Bartels D."/>
            <person name="Bekel T."/>
            <person name="Beyer S."/>
            <person name="Bode E."/>
            <person name="Bode H.B."/>
            <person name="Bolten C.J."/>
            <person name="Choudhuri J.V."/>
            <person name="Doss S."/>
            <person name="Elnakady Y.A."/>
            <person name="Frank B."/>
            <person name="Gaigalat L."/>
            <person name="Goesmann A."/>
            <person name="Groeger C."/>
            <person name="Gross F."/>
            <person name="Jelsbak L."/>
            <person name="Jelsbak L."/>
            <person name="Kalinowski J."/>
            <person name="Kegler C."/>
            <person name="Knauber T."/>
            <person name="Konietzny S."/>
            <person name="Kopp M."/>
            <person name="Krause L."/>
            <person name="Krug D."/>
            <person name="Linke B."/>
            <person name="Mahmud T."/>
            <person name="Martinez-Arias R."/>
            <person name="McHardy A.C."/>
            <person name="Merai M."/>
            <person name="Meyer F."/>
            <person name="Mormann S."/>
            <person name="Munoz-Dorado J."/>
            <person name="Perez J."/>
            <person name="Pradella S."/>
            <person name="Rachid S."/>
            <person name="Raddatz G."/>
            <person name="Rosenau F."/>
            <person name="Rueckert C."/>
            <person name="Sasse F."/>
            <person name="Scharfe M."/>
            <person name="Schuster S.C."/>
            <person name="Suen G."/>
            <person name="Treuner-Lange A."/>
            <person name="Velicer G.J."/>
            <person name="Vorholter F.-J."/>
            <person name="Weissman K.J."/>
            <person name="Welch R.D."/>
            <person name="Wenzel S.C."/>
            <person name="Whitworth D.E."/>
            <person name="Wilhelm S."/>
            <person name="Wittmann C."/>
            <person name="Bloecker H."/>
            <person name="Puehler A."/>
            <person name="Mueller R."/>
        </authorList>
    </citation>
    <scope>NUCLEOTIDE SEQUENCE [LARGE SCALE GENOMIC DNA]</scope>
    <source>
        <strain>So ce56</strain>
    </source>
</reference>
<protein>
    <recommendedName>
        <fullName evidence="1">Large ribosomal subunit protein bL34</fullName>
    </recommendedName>
    <alternativeName>
        <fullName evidence="2">50S ribosomal protein L34</fullName>
    </alternativeName>
</protein>
<organism>
    <name type="scientific">Sorangium cellulosum (strain So ce56)</name>
    <name type="common">Polyangium cellulosum (strain So ce56)</name>
    <dbReference type="NCBI Taxonomy" id="448385"/>
    <lineage>
        <taxon>Bacteria</taxon>
        <taxon>Pseudomonadati</taxon>
        <taxon>Myxococcota</taxon>
        <taxon>Polyangia</taxon>
        <taxon>Polyangiales</taxon>
        <taxon>Polyangiaceae</taxon>
        <taxon>Sorangium</taxon>
    </lineage>
</organism>
<sequence length="49" mass="5807">MKRTYQPHNTRRARTHGFRARMATAGGRKVINNRRRKGRARLAPTIYKK</sequence>
<accession>A9G6E5</accession>
<dbReference type="EMBL" id="AM746676">
    <property type="protein sequence ID" value="CAN92682.1"/>
    <property type="molecule type" value="Genomic_DNA"/>
</dbReference>
<dbReference type="RefSeq" id="WP_012235155.1">
    <property type="nucleotide sequence ID" value="NC_010162.1"/>
</dbReference>
<dbReference type="SMR" id="A9G6E5"/>
<dbReference type="STRING" id="448385.sce2523"/>
<dbReference type="KEGG" id="scl:sce2523"/>
<dbReference type="eggNOG" id="COG0230">
    <property type="taxonomic scope" value="Bacteria"/>
</dbReference>
<dbReference type="HOGENOM" id="CLU_129938_2_0_7"/>
<dbReference type="OrthoDB" id="9804164at2"/>
<dbReference type="BioCyc" id="SCEL448385:SCE_RS12910-MONOMER"/>
<dbReference type="Proteomes" id="UP000002139">
    <property type="component" value="Chromosome"/>
</dbReference>
<dbReference type="GO" id="GO:1990904">
    <property type="term" value="C:ribonucleoprotein complex"/>
    <property type="evidence" value="ECO:0007669"/>
    <property type="project" value="UniProtKB-KW"/>
</dbReference>
<dbReference type="GO" id="GO:0005840">
    <property type="term" value="C:ribosome"/>
    <property type="evidence" value="ECO:0007669"/>
    <property type="project" value="UniProtKB-KW"/>
</dbReference>
<dbReference type="GO" id="GO:0003735">
    <property type="term" value="F:structural constituent of ribosome"/>
    <property type="evidence" value="ECO:0007669"/>
    <property type="project" value="InterPro"/>
</dbReference>
<dbReference type="GO" id="GO:0006412">
    <property type="term" value="P:translation"/>
    <property type="evidence" value="ECO:0007669"/>
    <property type="project" value="UniProtKB-UniRule"/>
</dbReference>
<dbReference type="FunFam" id="1.10.287.3980:FF:000001">
    <property type="entry name" value="Mitochondrial ribosomal protein L34"/>
    <property type="match status" value="1"/>
</dbReference>
<dbReference type="Gene3D" id="1.10.287.3980">
    <property type="match status" value="1"/>
</dbReference>
<dbReference type="HAMAP" id="MF_00391">
    <property type="entry name" value="Ribosomal_bL34"/>
    <property type="match status" value="1"/>
</dbReference>
<dbReference type="InterPro" id="IPR000271">
    <property type="entry name" value="Ribosomal_bL34"/>
</dbReference>
<dbReference type="InterPro" id="IPR020939">
    <property type="entry name" value="Ribosomal_bL34_CS"/>
</dbReference>
<dbReference type="NCBIfam" id="TIGR01030">
    <property type="entry name" value="rpmH_bact"/>
    <property type="match status" value="1"/>
</dbReference>
<dbReference type="PANTHER" id="PTHR14503:SF4">
    <property type="entry name" value="LARGE RIBOSOMAL SUBUNIT PROTEIN BL34M"/>
    <property type="match status" value="1"/>
</dbReference>
<dbReference type="PANTHER" id="PTHR14503">
    <property type="entry name" value="MITOCHONDRIAL RIBOSOMAL PROTEIN 34 FAMILY MEMBER"/>
    <property type="match status" value="1"/>
</dbReference>
<dbReference type="Pfam" id="PF00468">
    <property type="entry name" value="Ribosomal_L34"/>
    <property type="match status" value="1"/>
</dbReference>
<dbReference type="PROSITE" id="PS00784">
    <property type="entry name" value="RIBOSOMAL_L34"/>
    <property type="match status" value="1"/>
</dbReference>
<feature type="chain" id="PRO_1000080271" description="Large ribosomal subunit protein bL34">
    <location>
        <begin position="1"/>
        <end position="49"/>
    </location>
</feature>
<comment type="similarity">
    <text evidence="1">Belongs to the bacterial ribosomal protein bL34 family.</text>
</comment>
<name>RL34_SORC5</name>
<keyword id="KW-1185">Reference proteome</keyword>
<keyword id="KW-0687">Ribonucleoprotein</keyword>
<keyword id="KW-0689">Ribosomal protein</keyword>
<proteinExistence type="inferred from homology"/>